<feature type="chain" id="PRO_0000267301" description="dTTP/UTP pyrophosphatase">
    <location>
        <begin position="1"/>
        <end position="210"/>
    </location>
</feature>
<feature type="active site" description="Proton acceptor" evidence="1">
    <location>
        <position position="80"/>
    </location>
</feature>
<feature type="site" description="Important for substrate specificity" evidence="1">
    <location>
        <position position="22"/>
    </location>
</feature>
<feature type="site" description="Important for substrate specificity" evidence="1">
    <location>
        <position position="81"/>
    </location>
</feature>
<feature type="site" description="Important for substrate specificity" evidence="1">
    <location>
        <position position="164"/>
    </location>
</feature>
<keyword id="KW-0963">Cytoplasm</keyword>
<keyword id="KW-0378">Hydrolase</keyword>
<keyword id="KW-0546">Nucleotide metabolism</keyword>
<keyword id="KW-1185">Reference proteome</keyword>
<gene>
    <name type="ordered locus">DVU_0527</name>
</gene>
<sequence>MFTSTGPFTAAHPVILASGSPRRRAFFEQMGIPFEVILPVDAEPSPIEGEQPEVYVRRAAEAKARAVAADHKGRLVVAADTVVALDDMILGKPASADDALSMLRRLAGRTHVVASGCCVVLPEGGRETFHSITRVTMWDCPEEALAAYVATGEPSDKAGAYGIQGIGAFLVRSIEGSWTNVVGLPVAELTALLLRRGAIHCQLPVEAVHA</sequence>
<protein>
    <recommendedName>
        <fullName evidence="1">dTTP/UTP pyrophosphatase</fullName>
        <shortName evidence="1">dTTPase/UTPase</shortName>
        <ecNumber evidence="1">3.6.1.9</ecNumber>
    </recommendedName>
    <alternativeName>
        <fullName evidence="1">Nucleoside triphosphate pyrophosphatase</fullName>
    </alternativeName>
    <alternativeName>
        <fullName evidence="1">Nucleotide pyrophosphatase</fullName>
        <shortName evidence="1">Nucleotide PPase</shortName>
    </alternativeName>
</protein>
<dbReference type="EC" id="3.6.1.9" evidence="1"/>
<dbReference type="EMBL" id="AE017285">
    <property type="protein sequence ID" value="AAS95009.1"/>
    <property type="molecule type" value="Genomic_DNA"/>
</dbReference>
<dbReference type="RefSeq" id="WP_010937833.1">
    <property type="nucleotide sequence ID" value="NC_002937.3"/>
</dbReference>
<dbReference type="RefSeq" id="YP_009750.1">
    <property type="nucleotide sequence ID" value="NC_002937.3"/>
</dbReference>
<dbReference type="SMR" id="Q72EP2"/>
<dbReference type="STRING" id="882.DVU_0527"/>
<dbReference type="PaxDb" id="882-DVU_0527"/>
<dbReference type="EnsemblBacteria" id="AAS95009">
    <property type="protein sequence ID" value="AAS95009"/>
    <property type="gene ID" value="DVU_0527"/>
</dbReference>
<dbReference type="KEGG" id="dvu:DVU_0527"/>
<dbReference type="PATRIC" id="fig|882.5.peg.503"/>
<dbReference type="eggNOG" id="COG0424">
    <property type="taxonomic scope" value="Bacteria"/>
</dbReference>
<dbReference type="HOGENOM" id="CLU_040416_0_0_7"/>
<dbReference type="OrthoDB" id="9807767at2"/>
<dbReference type="PhylomeDB" id="Q72EP2"/>
<dbReference type="Proteomes" id="UP000002194">
    <property type="component" value="Chromosome"/>
</dbReference>
<dbReference type="GO" id="GO:0005737">
    <property type="term" value="C:cytoplasm"/>
    <property type="evidence" value="ECO:0007669"/>
    <property type="project" value="UniProtKB-SubCell"/>
</dbReference>
<dbReference type="GO" id="GO:0036218">
    <property type="term" value="F:dTTP diphosphatase activity"/>
    <property type="evidence" value="ECO:0007669"/>
    <property type="project" value="RHEA"/>
</dbReference>
<dbReference type="GO" id="GO:0036221">
    <property type="term" value="F:UTP diphosphatase activity"/>
    <property type="evidence" value="ECO:0007669"/>
    <property type="project" value="RHEA"/>
</dbReference>
<dbReference type="GO" id="GO:0009117">
    <property type="term" value="P:nucleotide metabolic process"/>
    <property type="evidence" value="ECO:0007669"/>
    <property type="project" value="UniProtKB-KW"/>
</dbReference>
<dbReference type="CDD" id="cd00555">
    <property type="entry name" value="Maf"/>
    <property type="match status" value="1"/>
</dbReference>
<dbReference type="Gene3D" id="3.90.950.10">
    <property type="match status" value="1"/>
</dbReference>
<dbReference type="HAMAP" id="MF_00528">
    <property type="entry name" value="Maf"/>
    <property type="match status" value="1"/>
</dbReference>
<dbReference type="InterPro" id="IPR029001">
    <property type="entry name" value="ITPase-like_fam"/>
</dbReference>
<dbReference type="InterPro" id="IPR003697">
    <property type="entry name" value="Maf-like"/>
</dbReference>
<dbReference type="NCBIfam" id="TIGR00172">
    <property type="entry name" value="maf"/>
    <property type="match status" value="1"/>
</dbReference>
<dbReference type="NCBIfam" id="NF010942">
    <property type="entry name" value="PRK14362.1"/>
    <property type="match status" value="1"/>
</dbReference>
<dbReference type="PANTHER" id="PTHR43213">
    <property type="entry name" value="BIFUNCTIONAL DTTP/UTP PYROPHOSPHATASE/METHYLTRANSFERASE PROTEIN-RELATED"/>
    <property type="match status" value="1"/>
</dbReference>
<dbReference type="PANTHER" id="PTHR43213:SF5">
    <property type="entry name" value="BIFUNCTIONAL DTTP_UTP PYROPHOSPHATASE_METHYLTRANSFERASE PROTEIN-RELATED"/>
    <property type="match status" value="1"/>
</dbReference>
<dbReference type="Pfam" id="PF02545">
    <property type="entry name" value="Maf"/>
    <property type="match status" value="1"/>
</dbReference>
<dbReference type="PIRSF" id="PIRSF006305">
    <property type="entry name" value="Maf"/>
    <property type="match status" value="1"/>
</dbReference>
<dbReference type="SUPFAM" id="SSF52972">
    <property type="entry name" value="ITPase-like"/>
    <property type="match status" value="1"/>
</dbReference>
<name>NTPPA_NITV2</name>
<organism>
    <name type="scientific">Nitratidesulfovibrio vulgaris (strain ATCC 29579 / DSM 644 / CCUG 34227 / NCIMB 8303 / VKM B-1760 / Hildenborough)</name>
    <name type="common">Desulfovibrio vulgaris</name>
    <dbReference type="NCBI Taxonomy" id="882"/>
    <lineage>
        <taxon>Bacteria</taxon>
        <taxon>Pseudomonadati</taxon>
        <taxon>Thermodesulfobacteriota</taxon>
        <taxon>Desulfovibrionia</taxon>
        <taxon>Desulfovibrionales</taxon>
        <taxon>Desulfovibrionaceae</taxon>
        <taxon>Nitratidesulfovibrio</taxon>
    </lineage>
</organism>
<proteinExistence type="inferred from homology"/>
<comment type="function">
    <text evidence="1">Nucleoside triphosphate pyrophosphatase that hydrolyzes dTTP and UTP. May have a dual role in cell division arrest and in preventing the incorporation of modified nucleotides into cellular nucleic acids.</text>
</comment>
<comment type="catalytic activity">
    <reaction evidence="1">
        <text>dTTP + H2O = dTMP + diphosphate + H(+)</text>
        <dbReference type="Rhea" id="RHEA:28534"/>
        <dbReference type="ChEBI" id="CHEBI:15377"/>
        <dbReference type="ChEBI" id="CHEBI:15378"/>
        <dbReference type="ChEBI" id="CHEBI:33019"/>
        <dbReference type="ChEBI" id="CHEBI:37568"/>
        <dbReference type="ChEBI" id="CHEBI:63528"/>
        <dbReference type="EC" id="3.6.1.9"/>
    </reaction>
</comment>
<comment type="catalytic activity">
    <reaction evidence="1">
        <text>UTP + H2O = UMP + diphosphate + H(+)</text>
        <dbReference type="Rhea" id="RHEA:29395"/>
        <dbReference type="ChEBI" id="CHEBI:15377"/>
        <dbReference type="ChEBI" id="CHEBI:15378"/>
        <dbReference type="ChEBI" id="CHEBI:33019"/>
        <dbReference type="ChEBI" id="CHEBI:46398"/>
        <dbReference type="ChEBI" id="CHEBI:57865"/>
        <dbReference type="EC" id="3.6.1.9"/>
    </reaction>
</comment>
<comment type="cofactor">
    <cofactor evidence="1">
        <name>a divalent metal cation</name>
        <dbReference type="ChEBI" id="CHEBI:60240"/>
    </cofactor>
</comment>
<comment type="subcellular location">
    <subcellularLocation>
        <location evidence="1">Cytoplasm</location>
    </subcellularLocation>
</comment>
<comment type="similarity">
    <text evidence="1">Belongs to the Maf family. YhdE subfamily.</text>
</comment>
<reference key="1">
    <citation type="journal article" date="2004" name="Nat. Biotechnol.">
        <title>The genome sequence of the anaerobic, sulfate-reducing bacterium Desulfovibrio vulgaris Hildenborough.</title>
        <authorList>
            <person name="Heidelberg J.F."/>
            <person name="Seshadri R."/>
            <person name="Haveman S.A."/>
            <person name="Hemme C.L."/>
            <person name="Paulsen I.T."/>
            <person name="Kolonay J.F."/>
            <person name="Eisen J.A."/>
            <person name="Ward N.L."/>
            <person name="Methe B.A."/>
            <person name="Brinkac L.M."/>
            <person name="Daugherty S.C."/>
            <person name="DeBoy R.T."/>
            <person name="Dodson R.J."/>
            <person name="Durkin A.S."/>
            <person name="Madupu R."/>
            <person name="Nelson W.C."/>
            <person name="Sullivan S.A."/>
            <person name="Fouts D.E."/>
            <person name="Haft D.H."/>
            <person name="Selengut J."/>
            <person name="Peterson J.D."/>
            <person name="Davidsen T.M."/>
            <person name="Zafar N."/>
            <person name="Zhou L."/>
            <person name="Radune D."/>
            <person name="Dimitrov G."/>
            <person name="Hance M."/>
            <person name="Tran K."/>
            <person name="Khouri H.M."/>
            <person name="Gill J."/>
            <person name="Utterback T.R."/>
            <person name="Feldblyum T.V."/>
            <person name="Wall J.D."/>
            <person name="Voordouw G."/>
            <person name="Fraser C.M."/>
        </authorList>
    </citation>
    <scope>NUCLEOTIDE SEQUENCE [LARGE SCALE GENOMIC DNA]</scope>
    <source>
        <strain>ATCC 29579 / DSM 644 / CCUG 34227 / NCIMB 8303 / VKM B-1760 / Hildenborough</strain>
    </source>
</reference>
<evidence type="ECO:0000255" key="1">
    <source>
        <dbReference type="HAMAP-Rule" id="MF_00528"/>
    </source>
</evidence>
<accession>Q72EP2</accession>